<comment type="function">
    <text evidence="6">PPIases accelerate the folding of proteins. It catalyzes the cis-trans isomerization of proline imidic peptide bonds in oligopeptides.</text>
</comment>
<comment type="catalytic activity">
    <reaction evidence="4">
        <text>[protein]-peptidylproline (omega=180) = [protein]-peptidylproline (omega=0)</text>
        <dbReference type="Rhea" id="RHEA:16237"/>
        <dbReference type="Rhea" id="RHEA-COMP:10747"/>
        <dbReference type="Rhea" id="RHEA-COMP:10748"/>
        <dbReference type="ChEBI" id="CHEBI:83833"/>
        <dbReference type="ChEBI" id="CHEBI:83834"/>
        <dbReference type="EC" id="5.2.1.8"/>
    </reaction>
</comment>
<comment type="activity regulation">
    <text evidence="4">Cyclosporin A (CsA) inhibits CYPB.</text>
</comment>
<comment type="subcellular location">
    <subcellularLocation>
        <location>Secreted</location>
    </subcellularLocation>
</comment>
<comment type="miscellaneous">
    <text evidence="3">Present with 339 molecules/cell in log phase SD medium.</text>
</comment>
<comment type="similarity">
    <text evidence="5">Belongs to the cyclophilin-type PPIase family. PPIase B subfamily.</text>
</comment>
<dbReference type="EC" id="5.2.1.8" evidence="4"/>
<dbReference type="EMBL" id="X51497">
    <property type="protein sequence ID" value="CAA35865.1"/>
    <property type="status" value="ALT_SEQ"/>
    <property type="molecule type" value="Genomic_DNA"/>
</dbReference>
<dbReference type="EMBL" id="U00061">
    <property type="protein sequence ID" value="AAB68386.1"/>
    <property type="molecule type" value="Genomic_DNA"/>
</dbReference>
<dbReference type="EMBL" id="AY558279">
    <property type="protein sequence ID" value="AAS56605.1"/>
    <property type="molecule type" value="Genomic_DNA"/>
</dbReference>
<dbReference type="EMBL" id="BK006934">
    <property type="protein sequence ID" value="DAA06750.1"/>
    <property type="molecule type" value="Genomic_DNA"/>
</dbReference>
<dbReference type="PIR" id="S12324">
    <property type="entry name" value="S12324"/>
</dbReference>
<dbReference type="RefSeq" id="NP_011924.1">
    <property type="nucleotide sequence ID" value="NM_001179187.1"/>
</dbReference>
<dbReference type="SMR" id="P23285"/>
<dbReference type="BioGRID" id="36489">
    <property type="interactions" value="88"/>
</dbReference>
<dbReference type="DIP" id="DIP-1280N"/>
<dbReference type="FunCoup" id="P23285">
    <property type="interactions" value="219"/>
</dbReference>
<dbReference type="IntAct" id="P23285">
    <property type="interactions" value="3"/>
</dbReference>
<dbReference type="MINT" id="P23285"/>
<dbReference type="STRING" id="4932.YHR057C"/>
<dbReference type="PaxDb" id="4932-YHR057C"/>
<dbReference type="PeptideAtlas" id="P23285"/>
<dbReference type="EnsemblFungi" id="YHR057C_mRNA">
    <property type="protein sequence ID" value="YHR057C"/>
    <property type="gene ID" value="YHR057C"/>
</dbReference>
<dbReference type="GeneID" id="856454"/>
<dbReference type="KEGG" id="sce:YHR057C"/>
<dbReference type="AGR" id="SGD:S000001099"/>
<dbReference type="SGD" id="S000001099">
    <property type="gene designation" value="CPR2"/>
</dbReference>
<dbReference type="VEuPathDB" id="FungiDB:YHR057C"/>
<dbReference type="eggNOG" id="KOG0880">
    <property type="taxonomic scope" value="Eukaryota"/>
</dbReference>
<dbReference type="GeneTree" id="ENSGT00940000167766"/>
<dbReference type="HOGENOM" id="CLU_012062_4_2_1"/>
<dbReference type="InParanoid" id="P23285"/>
<dbReference type="OMA" id="CSIINSG"/>
<dbReference type="OrthoDB" id="193499at2759"/>
<dbReference type="BioCyc" id="YEAST:YHR057C-MONOMER"/>
<dbReference type="BioGRID-ORCS" id="856454">
    <property type="hits" value="0 hits in 10 CRISPR screens"/>
</dbReference>
<dbReference type="PRO" id="PR:P23285"/>
<dbReference type="Proteomes" id="UP000002311">
    <property type="component" value="Chromosome VIII"/>
</dbReference>
<dbReference type="RNAct" id="P23285">
    <property type="molecule type" value="protein"/>
</dbReference>
<dbReference type="GO" id="GO:0005737">
    <property type="term" value="C:cytoplasm"/>
    <property type="evidence" value="ECO:0000318"/>
    <property type="project" value="GO_Central"/>
</dbReference>
<dbReference type="GO" id="GO:0005783">
    <property type="term" value="C:endoplasmic reticulum"/>
    <property type="evidence" value="ECO:0000318"/>
    <property type="project" value="GO_Central"/>
</dbReference>
<dbReference type="GO" id="GO:0005576">
    <property type="term" value="C:extracellular region"/>
    <property type="evidence" value="ECO:0007669"/>
    <property type="project" value="UniProtKB-SubCell"/>
</dbReference>
<dbReference type="GO" id="GO:0000324">
    <property type="term" value="C:fungal-type vacuole"/>
    <property type="evidence" value="ECO:0007005"/>
    <property type="project" value="SGD"/>
</dbReference>
<dbReference type="GO" id="GO:0016018">
    <property type="term" value="F:cyclosporin A binding"/>
    <property type="evidence" value="ECO:0000318"/>
    <property type="project" value="GO_Central"/>
</dbReference>
<dbReference type="GO" id="GO:0003755">
    <property type="term" value="F:peptidyl-prolyl cis-trans isomerase activity"/>
    <property type="evidence" value="ECO:0000314"/>
    <property type="project" value="SGD"/>
</dbReference>
<dbReference type="GO" id="GO:0006457">
    <property type="term" value="P:protein folding"/>
    <property type="evidence" value="ECO:0000318"/>
    <property type="project" value="GO_Central"/>
</dbReference>
<dbReference type="FunFam" id="2.40.100.10:FF:000019">
    <property type="entry name" value="Peptidyl-prolyl cis-trans isomerase"/>
    <property type="match status" value="1"/>
</dbReference>
<dbReference type="Gene3D" id="2.40.100.10">
    <property type="entry name" value="Cyclophilin-like"/>
    <property type="match status" value="1"/>
</dbReference>
<dbReference type="InterPro" id="IPR029000">
    <property type="entry name" value="Cyclophilin-like_dom_sf"/>
</dbReference>
<dbReference type="InterPro" id="IPR024936">
    <property type="entry name" value="Cyclophilin-type_PPIase"/>
</dbReference>
<dbReference type="InterPro" id="IPR020892">
    <property type="entry name" value="Cyclophilin-type_PPIase_CS"/>
</dbReference>
<dbReference type="InterPro" id="IPR002130">
    <property type="entry name" value="Cyclophilin-type_PPIase_dom"/>
</dbReference>
<dbReference type="PANTHER" id="PTHR11071">
    <property type="entry name" value="PEPTIDYL-PROLYL CIS-TRANS ISOMERASE"/>
    <property type="match status" value="1"/>
</dbReference>
<dbReference type="PANTHER" id="PTHR11071:SF561">
    <property type="entry name" value="PEPTIDYL-PROLYL CIS-TRANS ISOMERASE D-RELATED"/>
    <property type="match status" value="1"/>
</dbReference>
<dbReference type="Pfam" id="PF00160">
    <property type="entry name" value="Pro_isomerase"/>
    <property type="match status" value="1"/>
</dbReference>
<dbReference type="PIRSF" id="PIRSF001467">
    <property type="entry name" value="Peptidylpro_ismrse"/>
    <property type="match status" value="1"/>
</dbReference>
<dbReference type="PRINTS" id="PR00153">
    <property type="entry name" value="CSAPPISMRASE"/>
</dbReference>
<dbReference type="SUPFAM" id="SSF50891">
    <property type="entry name" value="Cyclophilin-like"/>
    <property type="match status" value="1"/>
</dbReference>
<dbReference type="PROSITE" id="PS00170">
    <property type="entry name" value="CSA_PPIASE_1"/>
    <property type="match status" value="1"/>
</dbReference>
<dbReference type="PROSITE" id="PS50072">
    <property type="entry name" value="CSA_PPIASE_2"/>
    <property type="match status" value="1"/>
</dbReference>
<evidence type="ECO:0000255" key="1"/>
<evidence type="ECO:0000255" key="2">
    <source>
        <dbReference type="PROSITE-ProRule" id="PRU00156"/>
    </source>
</evidence>
<evidence type="ECO:0000269" key="3">
    <source>
    </source>
</evidence>
<evidence type="ECO:0000269" key="4">
    <source>
    </source>
</evidence>
<evidence type="ECO:0000305" key="5"/>
<evidence type="ECO:0000305" key="6">
    <source>
    </source>
</evidence>
<feature type="signal peptide" evidence="1">
    <location>
        <begin position="1"/>
        <end position="20"/>
    </location>
</feature>
<feature type="chain" id="PRO_0000025486" description="Peptidyl-prolyl cis-trans isomerase B">
    <location>
        <begin position="21"/>
        <end position="205"/>
    </location>
</feature>
<feature type="domain" description="PPIase cyclophilin-type" evidence="2">
    <location>
        <begin position="39"/>
        <end position="198"/>
    </location>
</feature>
<name>CYPB_YEAST</name>
<proteinExistence type="evidence at protein level"/>
<protein>
    <recommendedName>
        <fullName>Peptidyl-prolyl cis-trans isomerase B</fullName>
        <shortName>PPIase B</shortName>
        <ecNumber evidence="4">5.2.1.8</ecNumber>
    </recommendedName>
    <alternativeName>
        <fullName>Cyclophilin B</fullName>
    </alternativeName>
    <alternativeName>
        <fullName>Cyclophilin-related protein</fullName>
    </alternativeName>
    <alternativeName>
        <fullName>Rotamase B</fullName>
    </alternativeName>
</protein>
<gene>
    <name type="primary">CPR2</name>
    <name type="synonym">CRG</name>
    <name type="synonym">CYP2</name>
    <name type="synonym">SCC2</name>
    <name type="ordered locus">YHR057C</name>
</gene>
<reference key="1">
    <citation type="journal article" date="1990" name="Nucleic Acids Res.">
        <title>A second cyclophilin-related gene in Saccharomyces cerevisiae.</title>
        <authorList>
            <person name="Koser P."/>
            <person name="Sylvester D."/>
            <person name="Livi G.P."/>
            <person name="Bergsma D.J."/>
        </authorList>
    </citation>
    <scope>NUCLEOTIDE SEQUENCE [GENOMIC DNA]</scope>
</reference>
<reference key="2">
    <citation type="journal article" date="1994" name="Science">
        <title>Complete nucleotide sequence of Saccharomyces cerevisiae chromosome VIII.</title>
        <authorList>
            <person name="Johnston M."/>
            <person name="Andrews S."/>
            <person name="Brinkman R."/>
            <person name="Cooper J."/>
            <person name="Ding H."/>
            <person name="Dover J."/>
            <person name="Du Z."/>
            <person name="Favello A."/>
            <person name="Fulton L."/>
            <person name="Gattung S."/>
            <person name="Geisel C."/>
            <person name="Kirsten J."/>
            <person name="Kucaba T."/>
            <person name="Hillier L.W."/>
            <person name="Jier M."/>
            <person name="Johnston L."/>
            <person name="Langston Y."/>
            <person name="Latreille P."/>
            <person name="Louis E.J."/>
            <person name="Macri C."/>
            <person name="Mardis E."/>
            <person name="Menezes S."/>
            <person name="Mouser L."/>
            <person name="Nhan M."/>
            <person name="Rifkin L."/>
            <person name="Riles L."/>
            <person name="St Peter H."/>
            <person name="Trevaskis E."/>
            <person name="Vaughan K."/>
            <person name="Vignati D."/>
            <person name="Wilcox L."/>
            <person name="Wohldman P."/>
            <person name="Waterston R."/>
            <person name="Wilson R."/>
            <person name="Vaudin M."/>
        </authorList>
    </citation>
    <scope>NUCLEOTIDE SEQUENCE [LARGE SCALE GENOMIC DNA]</scope>
    <source>
        <strain>ATCC 204508 / S288c</strain>
    </source>
</reference>
<reference key="3">
    <citation type="journal article" date="2014" name="G3 (Bethesda)">
        <title>The reference genome sequence of Saccharomyces cerevisiae: Then and now.</title>
        <authorList>
            <person name="Engel S.R."/>
            <person name="Dietrich F.S."/>
            <person name="Fisk D.G."/>
            <person name="Binkley G."/>
            <person name="Balakrishnan R."/>
            <person name="Costanzo M.C."/>
            <person name="Dwight S.S."/>
            <person name="Hitz B.C."/>
            <person name="Karra K."/>
            <person name="Nash R.S."/>
            <person name="Weng S."/>
            <person name="Wong E.D."/>
            <person name="Lloyd P."/>
            <person name="Skrzypek M.S."/>
            <person name="Miyasato S.R."/>
            <person name="Simison M."/>
            <person name="Cherry J.M."/>
        </authorList>
    </citation>
    <scope>GENOME REANNOTATION</scope>
    <source>
        <strain>ATCC 204508 / S288c</strain>
    </source>
</reference>
<reference key="4">
    <citation type="journal article" date="2007" name="Genome Res.">
        <title>Approaching a complete repository of sequence-verified protein-encoding clones for Saccharomyces cerevisiae.</title>
        <authorList>
            <person name="Hu Y."/>
            <person name="Rolfs A."/>
            <person name="Bhullar B."/>
            <person name="Murthy T.V.S."/>
            <person name="Zhu C."/>
            <person name="Berger M.F."/>
            <person name="Camargo A.A."/>
            <person name="Kelley F."/>
            <person name="McCarron S."/>
            <person name="Jepson D."/>
            <person name="Richardson A."/>
            <person name="Raphael J."/>
            <person name="Moreira D."/>
            <person name="Taycher E."/>
            <person name="Zuo D."/>
            <person name="Mohr S."/>
            <person name="Kane M.F."/>
            <person name="Williamson J."/>
            <person name="Simpson A.J.G."/>
            <person name="Bulyk M.L."/>
            <person name="Harlow E."/>
            <person name="Marsischky G."/>
            <person name="Kolodner R.D."/>
            <person name="LaBaer J."/>
        </authorList>
    </citation>
    <scope>NUCLEOTIDE SEQUENCE [GENOMIC DNA]</scope>
    <source>
        <strain>ATCC 204508 / S288c</strain>
    </source>
</reference>
<reference key="5">
    <citation type="journal article" date="1991" name="Gene">
        <title>The CYP2 gene of Saccharomyces cerevisiae encodes a cyclosporin A-sensitive peptidyl-prolyl cis-trans isomerase with an N-terminal signal sequence.</title>
        <authorList>
            <person name="Koser P."/>
            <person name="Bergsma D.J."/>
            <person name="Cafferkey R."/>
            <person name="Eng W.-K."/>
            <person name="McLaughlin M.M."/>
            <person name="Ferrara A."/>
            <person name="Silverman C."/>
            <person name="Kasyan K."/>
            <person name="Bossard M.J."/>
            <person name="Johnson R.K."/>
            <person name="Porter T.G."/>
            <person name="Levy M.A."/>
            <person name="Livi G.P."/>
        </authorList>
    </citation>
    <scope>FUNCTION</scope>
    <scope>CATALYTIC ACTIVITY</scope>
</reference>
<reference key="6">
    <citation type="journal article" date="2003" name="Nature">
        <title>Global analysis of protein expression in yeast.</title>
        <authorList>
            <person name="Ghaemmaghami S."/>
            <person name="Huh W.-K."/>
            <person name="Bower K."/>
            <person name="Howson R.W."/>
            <person name="Belle A."/>
            <person name="Dephoure N."/>
            <person name="O'Shea E.K."/>
            <person name="Weissman J.S."/>
        </authorList>
    </citation>
    <scope>LEVEL OF PROTEIN EXPRESSION [LARGE SCALE ANALYSIS]</scope>
</reference>
<organism>
    <name type="scientific">Saccharomyces cerevisiae (strain ATCC 204508 / S288c)</name>
    <name type="common">Baker's yeast</name>
    <dbReference type="NCBI Taxonomy" id="559292"/>
    <lineage>
        <taxon>Eukaryota</taxon>
        <taxon>Fungi</taxon>
        <taxon>Dikarya</taxon>
        <taxon>Ascomycota</taxon>
        <taxon>Saccharomycotina</taxon>
        <taxon>Saccharomycetes</taxon>
        <taxon>Saccharomycetales</taxon>
        <taxon>Saccharomycetaceae</taxon>
        <taxon>Saccharomyces</taxon>
    </lineage>
</organism>
<accession>P23285</accession>
<accession>D3DL06</accession>
<sequence>MKFSGLWCWLLLFLSVNVIASDVGELIDQDDEVITQKVFFDIEHGEEKVGRIVIGLYGKVCPKTAKNFYKLSTTTNSKKGFIGSTFHRVIPNFMVQGGDFTDGTGVGGKSIYGDTFPDENFTLKHDRKGRLSMANRGKDTNGSQFFITTTEEASWLDGKHVVFGQVVDGMDVVNYIQHVSRDANDKPLEAVKIAKCGEWTPELSS</sequence>
<keyword id="KW-0413">Isomerase</keyword>
<keyword id="KW-1185">Reference proteome</keyword>
<keyword id="KW-0697">Rotamase</keyword>
<keyword id="KW-0964">Secreted</keyword>
<keyword id="KW-0732">Signal</keyword>